<keyword id="KW-0032">Aminotransferase</keyword>
<keyword id="KW-1185">Reference proteome</keyword>
<keyword id="KW-0808">Transferase</keyword>
<gene>
    <name evidence="1" type="primary">gcvT</name>
    <name type="ordered locus">Deide_04960</name>
</gene>
<comment type="function">
    <text evidence="1">The glycine cleavage system catalyzes the degradation of glycine.</text>
</comment>
<comment type="catalytic activity">
    <reaction evidence="1">
        <text>N(6)-[(R)-S(8)-aminomethyldihydrolipoyl]-L-lysyl-[protein] + (6S)-5,6,7,8-tetrahydrofolate = N(6)-[(R)-dihydrolipoyl]-L-lysyl-[protein] + (6R)-5,10-methylene-5,6,7,8-tetrahydrofolate + NH4(+)</text>
        <dbReference type="Rhea" id="RHEA:16945"/>
        <dbReference type="Rhea" id="RHEA-COMP:10475"/>
        <dbReference type="Rhea" id="RHEA-COMP:10492"/>
        <dbReference type="ChEBI" id="CHEBI:15636"/>
        <dbReference type="ChEBI" id="CHEBI:28938"/>
        <dbReference type="ChEBI" id="CHEBI:57453"/>
        <dbReference type="ChEBI" id="CHEBI:83100"/>
        <dbReference type="ChEBI" id="CHEBI:83143"/>
        <dbReference type="EC" id="2.1.2.10"/>
    </reaction>
</comment>
<comment type="subunit">
    <text evidence="1">The glycine cleavage system is composed of four proteins: P, T, L and H.</text>
</comment>
<comment type="similarity">
    <text evidence="1">Belongs to the GcvT family.</text>
</comment>
<organism>
    <name type="scientific">Deinococcus deserti (strain DSM 17065 / CIP 109153 / LMG 22923 / VCD115)</name>
    <dbReference type="NCBI Taxonomy" id="546414"/>
    <lineage>
        <taxon>Bacteria</taxon>
        <taxon>Thermotogati</taxon>
        <taxon>Deinococcota</taxon>
        <taxon>Deinococci</taxon>
        <taxon>Deinococcales</taxon>
        <taxon>Deinococcaceae</taxon>
        <taxon>Deinococcus</taxon>
    </lineage>
</organism>
<accession>C1D0F7</accession>
<dbReference type="EC" id="2.1.2.10" evidence="1"/>
<dbReference type="EMBL" id="CP001114">
    <property type="protein sequence ID" value="ACO45331.1"/>
    <property type="molecule type" value="Genomic_DNA"/>
</dbReference>
<dbReference type="RefSeq" id="WP_012692454.1">
    <property type="nucleotide sequence ID" value="NC_012526.1"/>
</dbReference>
<dbReference type="SMR" id="C1D0F7"/>
<dbReference type="STRING" id="546414.Deide_04960"/>
<dbReference type="PaxDb" id="546414-Deide_04960"/>
<dbReference type="KEGG" id="ddr:Deide_04960"/>
<dbReference type="eggNOG" id="COG0404">
    <property type="taxonomic scope" value="Bacteria"/>
</dbReference>
<dbReference type="HOGENOM" id="CLU_007884_10_2_0"/>
<dbReference type="OrthoDB" id="9774591at2"/>
<dbReference type="Proteomes" id="UP000002208">
    <property type="component" value="Chromosome"/>
</dbReference>
<dbReference type="GO" id="GO:0005829">
    <property type="term" value="C:cytosol"/>
    <property type="evidence" value="ECO:0007669"/>
    <property type="project" value="TreeGrafter"/>
</dbReference>
<dbReference type="GO" id="GO:0005960">
    <property type="term" value="C:glycine cleavage complex"/>
    <property type="evidence" value="ECO:0007669"/>
    <property type="project" value="InterPro"/>
</dbReference>
<dbReference type="GO" id="GO:0004047">
    <property type="term" value="F:aminomethyltransferase activity"/>
    <property type="evidence" value="ECO:0007669"/>
    <property type="project" value="UniProtKB-UniRule"/>
</dbReference>
<dbReference type="GO" id="GO:0008483">
    <property type="term" value="F:transaminase activity"/>
    <property type="evidence" value="ECO:0007669"/>
    <property type="project" value="UniProtKB-KW"/>
</dbReference>
<dbReference type="GO" id="GO:0019464">
    <property type="term" value="P:glycine decarboxylation via glycine cleavage system"/>
    <property type="evidence" value="ECO:0007669"/>
    <property type="project" value="UniProtKB-UniRule"/>
</dbReference>
<dbReference type="FunFam" id="3.30.70.1400:FF:000001">
    <property type="entry name" value="Aminomethyltransferase"/>
    <property type="match status" value="1"/>
</dbReference>
<dbReference type="Gene3D" id="2.40.30.110">
    <property type="entry name" value="Aminomethyltransferase beta-barrel domains"/>
    <property type="match status" value="1"/>
</dbReference>
<dbReference type="Gene3D" id="3.30.70.1400">
    <property type="entry name" value="Aminomethyltransferase beta-barrel domains"/>
    <property type="match status" value="1"/>
</dbReference>
<dbReference type="Gene3D" id="4.10.1250.10">
    <property type="entry name" value="Aminomethyltransferase fragment"/>
    <property type="match status" value="1"/>
</dbReference>
<dbReference type="Gene3D" id="3.30.1360.120">
    <property type="entry name" value="Probable tRNA modification gtpase trme, domain 1"/>
    <property type="match status" value="1"/>
</dbReference>
<dbReference type="HAMAP" id="MF_00259">
    <property type="entry name" value="GcvT"/>
    <property type="match status" value="1"/>
</dbReference>
<dbReference type="InterPro" id="IPR006223">
    <property type="entry name" value="GCS_T"/>
</dbReference>
<dbReference type="InterPro" id="IPR022903">
    <property type="entry name" value="GCS_T_bac"/>
</dbReference>
<dbReference type="InterPro" id="IPR013977">
    <property type="entry name" value="GCST_C"/>
</dbReference>
<dbReference type="InterPro" id="IPR006222">
    <property type="entry name" value="GCV_T_N"/>
</dbReference>
<dbReference type="InterPro" id="IPR028896">
    <property type="entry name" value="GcvT/YgfZ/DmdA"/>
</dbReference>
<dbReference type="InterPro" id="IPR029043">
    <property type="entry name" value="GcvT/YgfZ_C"/>
</dbReference>
<dbReference type="InterPro" id="IPR027266">
    <property type="entry name" value="TrmE/GcvT_dom1"/>
</dbReference>
<dbReference type="NCBIfam" id="TIGR00528">
    <property type="entry name" value="gcvT"/>
    <property type="match status" value="1"/>
</dbReference>
<dbReference type="NCBIfam" id="NF001567">
    <property type="entry name" value="PRK00389.1"/>
    <property type="match status" value="1"/>
</dbReference>
<dbReference type="PANTHER" id="PTHR43757">
    <property type="entry name" value="AMINOMETHYLTRANSFERASE"/>
    <property type="match status" value="1"/>
</dbReference>
<dbReference type="PANTHER" id="PTHR43757:SF2">
    <property type="entry name" value="AMINOMETHYLTRANSFERASE, MITOCHONDRIAL"/>
    <property type="match status" value="1"/>
</dbReference>
<dbReference type="Pfam" id="PF01571">
    <property type="entry name" value="GCV_T"/>
    <property type="match status" value="1"/>
</dbReference>
<dbReference type="Pfam" id="PF08669">
    <property type="entry name" value="GCV_T_C"/>
    <property type="match status" value="1"/>
</dbReference>
<dbReference type="PIRSF" id="PIRSF006487">
    <property type="entry name" value="GcvT"/>
    <property type="match status" value="1"/>
</dbReference>
<dbReference type="SUPFAM" id="SSF101790">
    <property type="entry name" value="Aminomethyltransferase beta-barrel domain"/>
    <property type="match status" value="1"/>
</dbReference>
<dbReference type="SUPFAM" id="SSF103025">
    <property type="entry name" value="Folate-binding domain"/>
    <property type="match status" value="1"/>
</dbReference>
<feature type="chain" id="PRO_1000204634" description="Aminomethyltransferase">
    <location>
        <begin position="1"/>
        <end position="357"/>
    </location>
</feature>
<sequence>MTQTPETALKRTPLHAAHLRAGARMVPFGGWDMPVQYSGLKAEHQAVRESAGVFDVSHMGEFRIQGEGALAFLQHVTPNDVSKLRPGRAQYNWLPNDRGGLVDDIYIYMVGENEYLMVVNASNIDKDWAHLQTLAAGFGVTLTNESDRWALLAVQGPKAAEVLQPHVDVDLGSKKKNAYFPARLFGFNVHLARTGYTGEDGFEVFIDASEAETVWDKLMAIGVTPAGLGARDTLRLEAGFPLYGHEFADDIHPLSSHYTWVVKDKPFYGREALQQPAQQKLIGLKLDKVPVREGYPVLQSGQVVGHVTSGTSSPTLGHPIALALVQAGAADATDFEVEVRGKAHPATRTDVPFYKAP</sequence>
<proteinExistence type="inferred from homology"/>
<name>GCST_DEIDV</name>
<evidence type="ECO:0000255" key="1">
    <source>
        <dbReference type="HAMAP-Rule" id="MF_00259"/>
    </source>
</evidence>
<reference key="1">
    <citation type="journal article" date="2009" name="PLoS Genet.">
        <title>Alliance of proteomics and genomics to unravel the specificities of Sahara bacterium Deinococcus deserti.</title>
        <authorList>
            <person name="de Groot A."/>
            <person name="Dulermo R."/>
            <person name="Ortet P."/>
            <person name="Blanchard L."/>
            <person name="Guerin P."/>
            <person name="Fernandez B."/>
            <person name="Vacherie B."/>
            <person name="Dossat C."/>
            <person name="Jolivet E."/>
            <person name="Siguier P."/>
            <person name="Chandler M."/>
            <person name="Barakat M."/>
            <person name="Dedieu A."/>
            <person name="Barbe V."/>
            <person name="Heulin T."/>
            <person name="Sommer S."/>
            <person name="Achouak W."/>
            <person name="Armengaud J."/>
        </authorList>
    </citation>
    <scope>NUCLEOTIDE SEQUENCE [LARGE SCALE GENOMIC DNA]</scope>
    <source>
        <strain>DSM 17065 / CIP 109153 / LMG 22923 / VCD115</strain>
    </source>
</reference>
<protein>
    <recommendedName>
        <fullName evidence="1">Aminomethyltransferase</fullName>
        <ecNumber evidence="1">2.1.2.10</ecNumber>
    </recommendedName>
    <alternativeName>
        <fullName evidence="1">Glycine cleavage system T protein</fullName>
    </alternativeName>
</protein>